<evidence type="ECO:0000255" key="1">
    <source>
        <dbReference type="PROSITE-ProRule" id="PRU01073"/>
    </source>
</evidence>
<dbReference type="EMBL" id="M11920">
    <property type="status" value="NOT_ANNOTATED_CDS"/>
    <property type="molecule type" value="Genomic_DNA"/>
</dbReference>
<dbReference type="SMR" id="P10429"/>
<dbReference type="GO" id="GO:0003677">
    <property type="term" value="F:DNA binding"/>
    <property type="evidence" value="ECO:0007669"/>
    <property type="project" value="InterPro"/>
</dbReference>
<dbReference type="GO" id="GO:0000150">
    <property type="term" value="F:DNA strand exchange activity"/>
    <property type="evidence" value="ECO:0007669"/>
    <property type="project" value="InterPro"/>
</dbReference>
<dbReference type="Gene3D" id="3.90.1750.20">
    <property type="entry name" value="Putative Large Serine Recombinase, Chain B, Domain 2"/>
    <property type="match status" value="1"/>
</dbReference>
<dbReference type="InterPro" id="IPR038109">
    <property type="entry name" value="DNA_bind_recomb_sf"/>
</dbReference>
<dbReference type="InterPro" id="IPR011109">
    <property type="entry name" value="DNA_bind_recombinase_dom"/>
</dbReference>
<dbReference type="InterPro" id="IPR050639">
    <property type="entry name" value="SSR_resolvase"/>
</dbReference>
<dbReference type="PANTHER" id="PTHR30461">
    <property type="entry name" value="DNA-INVERTASE FROM LAMBDOID PROPHAGE"/>
    <property type="match status" value="1"/>
</dbReference>
<dbReference type="PANTHER" id="PTHR30461:SF19">
    <property type="entry name" value="SITE-SPECIFIC RECOMBINASE RESOLVASE FAMILY"/>
    <property type="match status" value="1"/>
</dbReference>
<dbReference type="Pfam" id="PF07508">
    <property type="entry name" value="Recombinase"/>
    <property type="match status" value="1"/>
</dbReference>
<dbReference type="PROSITE" id="PS51737">
    <property type="entry name" value="RECOMBINASE_DNA_BIND"/>
    <property type="match status" value="1"/>
</dbReference>
<reference key="1">
    <citation type="journal article" date="1985" name="Gene">
        <title>Nucleotide sequence of the immunity region of Bacillus subtilis bacteriophage phi 105: identification of the repressor gene and its mRNA and protein products.</title>
        <authorList>
            <person name="Cully D.F."/>
            <person name="Garro A.J."/>
        </authorList>
    </citation>
    <scope>NUCLEOTIDE SEQUENCE [GENOMIC DNA]</scope>
</reference>
<proteinExistence type="predicted"/>
<feature type="chain" id="PRO_0000077723" description="Uncharacterized immunity region protein 5">
    <location>
        <begin position="1"/>
        <end position="133"/>
    </location>
</feature>
<feature type="DNA-binding region" description="Recombinase" evidence="1">
    <location>
        <begin position="1"/>
        <end position="82"/>
    </location>
</feature>
<accession>P10429</accession>
<protein>
    <recommendedName>
        <fullName>Uncharacterized immunity region protein 5</fullName>
    </recommendedName>
</protein>
<sequence>MIDKIKKGYSLRELADYLDESDAIPKRGYKWHIASILVILKNPVLYGGFRWAGEILEGAFEGYISKKEFEQLQKMLHDRQNFKRRETSSIFIFQAKILCPNCGSRLTCERSIYFRKKDNKNVESNHYRCQHAP</sequence>
<organism>
    <name type="scientific">Bacillus phage phi105</name>
    <name type="common">Bacteriophage phi-105</name>
    <dbReference type="NCBI Taxonomy" id="10717"/>
    <lineage>
        <taxon>Viruses</taxon>
        <taxon>Duplodnaviria</taxon>
        <taxon>Heunggongvirae</taxon>
        <taxon>Uroviricota</taxon>
        <taxon>Caudoviricetes</taxon>
        <taxon>Spizizenvirus</taxon>
        <taxon>Spizizenvirus sv105</taxon>
    </lineage>
</organism>
<name>YIM5_BPPH1</name>
<organismHost>
    <name type="scientific">Bacillus subtilis</name>
    <dbReference type="NCBI Taxonomy" id="1423"/>
</organismHost>